<feature type="chain" id="PRO_0000235607" description="5'-nucleotidase SurE">
    <location>
        <begin position="1"/>
        <end position="251"/>
    </location>
</feature>
<feature type="binding site" evidence="1">
    <location>
        <position position="8"/>
    </location>
    <ligand>
        <name>a divalent metal cation</name>
        <dbReference type="ChEBI" id="CHEBI:60240"/>
    </ligand>
</feature>
<feature type="binding site" evidence="1">
    <location>
        <position position="9"/>
    </location>
    <ligand>
        <name>a divalent metal cation</name>
        <dbReference type="ChEBI" id="CHEBI:60240"/>
    </ligand>
</feature>
<feature type="binding site" evidence="1">
    <location>
        <position position="39"/>
    </location>
    <ligand>
        <name>a divalent metal cation</name>
        <dbReference type="ChEBI" id="CHEBI:60240"/>
    </ligand>
</feature>
<feature type="binding site" evidence="1">
    <location>
        <position position="90"/>
    </location>
    <ligand>
        <name>a divalent metal cation</name>
        <dbReference type="ChEBI" id="CHEBI:60240"/>
    </ligand>
</feature>
<sequence length="251" mass="27164">MKILLSNDDGVHALGIKVLFDELVKHFSVNVVAPDRNCSGASNSLTLLNPLRAEHLDNGFISVNGTPTDSVHLGSSQLFTDCDLVVAGINKGANLGDDTLYSGTVAAATEGRHMGMPAVAVSLAGNNEQHYQTAAIVTAKIIKRLRTHPLPADQILNINVPDIPLAELKGIKVTRLGHRHQAERMQKMQDPWQRDIYWYGVLGQELDGGEGTDFHAIANGYASVTPLTVDMTAHRSIENIKSWLTALNLSD</sequence>
<organism>
    <name type="scientific">Colwellia psychrerythraea (strain 34H / ATCC BAA-681)</name>
    <name type="common">Vibrio psychroerythus</name>
    <dbReference type="NCBI Taxonomy" id="167879"/>
    <lineage>
        <taxon>Bacteria</taxon>
        <taxon>Pseudomonadati</taxon>
        <taxon>Pseudomonadota</taxon>
        <taxon>Gammaproteobacteria</taxon>
        <taxon>Alteromonadales</taxon>
        <taxon>Colwelliaceae</taxon>
        <taxon>Colwellia</taxon>
    </lineage>
</organism>
<comment type="function">
    <text evidence="1">Nucleotidase that shows phosphatase activity on nucleoside 5'-monophosphates.</text>
</comment>
<comment type="catalytic activity">
    <reaction evidence="1">
        <text>a ribonucleoside 5'-phosphate + H2O = a ribonucleoside + phosphate</text>
        <dbReference type="Rhea" id="RHEA:12484"/>
        <dbReference type="ChEBI" id="CHEBI:15377"/>
        <dbReference type="ChEBI" id="CHEBI:18254"/>
        <dbReference type="ChEBI" id="CHEBI:43474"/>
        <dbReference type="ChEBI" id="CHEBI:58043"/>
        <dbReference type="EC" id="3.1.3.5"/>
    </reaction>
</comment>
<comment type="cofactor">
    <cofactor evidence="1">
        <name>a divalent metal cation</name>
        <dbReference type="ChEBI" id="CHEBI:60240"/>
    </cofactor>
    <text evidence="1">Binds 1 divalent metal cation per subunit.</text>
</comment>
<comment type="subcellular location">
    <subcellularLocation>
        <location evidence="1">Cytoplasm</location>
    </subcellularLocation>
</comment>
<comment type="similarity">
    <text evidence="1">Belongs to the SurE nucleotidase family.</text>
</comment>
<comment type="sequence caution" evidence="2">
    <conflict type="erroneous initiation">
        <sequence resource="EMBL-CDS" id="AAZ24272"/>
    </conflict>
</comment>
<name>SURE_COLP3</name>
<keyword id="KW-0963">Cytoplasm</keyword>
<keyword id="KW-0378">Hydrolase</keyword>
<keyword id="KW-0479">Metal-binding</keyword>
<keyword id="KW-0547">Nucleotide-binding</keyword>
<dbReference type="EC" id="3.1.3.5" evidence="1"/>
<dbReference type="EMBL" id="CP000083">
    <property type="protein sequence ID" value="AAZ24272.1"/>
    <property type="status" value="ALT_INIT"/>
    <property type="molecule type" value="Genomic_DNA"/>
</dbReference>
<dbReference type="RefSeq" id="WP_041737346.1">
    <property type="nucleotide sequence ID" value="NC_003910.7"/>
</dbReference>
<dbReference type="SMR" id="Q487E6"/>
<dbReference type="STRING" id="167879.CPS_1075"/>
<dbReference type="KEGG" id="cps:CPS_1075"/>
<dbReference type="eggNOG" id="COG0496">
    <property type="taxonomic scope" value="Bacteria"/>
</dbReference>
<dbReference type="HOGENOM" id="CLU_045192_1_2_6"/>
<dbReference type="Proteomes" id="UP000000547">
    <property type="component" value="Chromosome"/>
</dbReference>
<dbReference type="GO" id="GO:0005737">
    <property type="term" value="C:cytoplasm"/>
    <property type="evidence" value="ECO:0007669"/>
    <property type="project" value="UniProtKB-SubCell"/>
</dbReference>
<dbReference type="GO" id="GO:0008254">
    <property type="term" value="F:3'-nucleotidase activity"/>
    <property type="evidence" value="ECO:0007669"/>
    <property type="project" value="TreeGrafter"/>
</dbReference>
<dbReference type="GO" id="GO:0008253">
    <property type="term" value="F:5'-nucleotidase activity"/>
    <property type="evidence" value="ECO:0007669"/>
    <property type="project" value="UniProtKB-UniRule"/>
</dbReference>
<dbReference type="GO" id="GO:0004309">
    <property type="term" value="F:exopolyphosphatase activity"/>
    <property type="evidence" value="ECO:0007669"/>
    <property type="project" value="TreeGrafter"/>
</dbReference>
<dbReference type="GO" id="GO:0046872">
    <property type="term" value="F:metal ion binding"/>
    <property type="evidence" value="ECO:0007669"/>
    <property type="project" value="UniProtKB-UniRule"/>
</dbReference>
<dbReference type="GO" id="GO:0000166">
    <property type="term" value="F:nucleotide binding"/>
    <property type="evidence" value="ECO:0007669"/>
    <property type="project" value="UniProtKB-KW"/>
</dbReference>
<dbReference type="FunFam" id="3.40.1210.10:FF:000001">
    <property type="entry name" value="5'/3'-nucleotidase SurE"/>
    <property type="match status" value="1"/>
</dbReference>
<dbReference type="Gene3D" id="3.40.1210.10">
    <property type="entry name" value="Survival protein SurE-like phosphatase/nucleotidase"/>
    <property type="match status" value="1"/>
</dbReference>
<dbReference type="HAMAP" id="MF_00060">
    <property type="entry name" value="SurE"/>
    <property type="match status" value="1"/>
</dbReference>
<dbReference type="InterPro" id="IPR030048">
    <property type="entry name" value="SurE"/>
</dbReference>
<dbReference type="InterPro" id="IPR002828">
    <property type="entry name" value="SurE-like_Pase/nucleotidase"/>
</dbReference>
<dbReference type="InterPro" id="IPR036523">
    <property type="entry name" value="SurE-like_sf"/>
</dbReference>
<dbReference type="NCBIfam" id="NF001489">
    <property type="entry name" value="PRK00346.1-3"/>
    <property type="match status" value="1"/>
</dbReference>
<dbReference type="NCBIfam" id="NF001490">
    <property type="entry name" value="PRK00346.1-4"/>
    <property type="match status" value="1"/>
</dbReference>
<dbReference type="NCBIfam" id="TIGR00087">
    <property type="entry name" value="surE"/>
    <property type="match status" value="1"/>
</dbReference>
<dbReference type="PANTHER" id="PTHR30457">
    <property type="entry name" value="5'-NUCLEOTIDASE SURE"/>
    <property type="match status" value="1"/>
</dbReference>
<dbReference type="PANTHER" id="PTHR30457:SF12">
    <property type="entry name" value="5'_3'-NUCLEOTIDASE SURE"/>
    <property type="match status" value="1"/>
</dbReference>
<dbReference type="Pfam" id="PF01975">
    <property type="entry name" value="SurE"/>
    <property type="match status" value="1"/>
</dbReference>
<dbReference type="SUPFAM" id="SSF64167">
    <property type="entry name" value="SurE-like"/>
    <property type="match status" value="1"/>
</dbReference>
<reference key="1">
    <citation type="journal article" date="2005" name="Proc. Natl. Acad. Sci. U.S.A.">
        <title>The psychrophilic lifestyle as revealed by the genome sequence of Colwellia psychrerythraea 34H through genomic and proteomic analyses.</title>
        <authorList>
            <person name="Methe B.A."/>
            <person name="Nelson K.E."/>
            <person name="Deming J.W."/>
            <person name="Momen B."/>
            <person name="Melamud E."/>
            <person name="Zhang X."/>
            <person name="Moult J."/>
            <person name="Madupu R."/>
            <person name="Nelson W.C."/>
            <person name="Dodson R.J."/>
            <person name="Brinkac L.M."/>
            <person name="Daugherty S.C."/>
            <person name="Durkin A.S."/>
            <person name="DeBoy R.T."/>
            <person name="Kolonay J.F."/>
            <person name="Sullivan S.A."/>
            <person name="Zhou L."/>
            <person name="Davidsen T.M."/>
            <person name="Wu M."/>
            <person name="Huston A.L."/>
            <person name="Lewis M."/>
            <person name="Weaver B."/>
            <person name="Weidman J.F."/>
            <person name="Khouri H."/>
            <person name="Utterback T.R."/>
            <person name="Feldblyum T.V."/>
            <person name="Fraser C.M."/>
        </authorList>
    </citation>
    <scope>NUCLEOTIDE SEQUENCE [LARGE SCALE GENOMIC DNA]</scope>
    <source>
        <strain>34H / ATCC BAA-681</strain>
    </source>
</reference>
<gene>
    <name evidence="1" type="primary">surE</name>
    <name type="ordered locus">CPS_1075</name>
</gene>
<evidence type="ECO:0000255" key="1">
    <source>
        <dbReference type="HAMAP-Rule" id="MF_00060"/>
    </source>
</evidence>
<evidence type="ECO:0000305" key="2"/>
<accession>Q487E6</accession>
<protein>
    <recommendedName>
        <fullName evidence="1">5'-nucleotidase SurE</fullName>
        <ecNumber evidence="1">3.1.3.5</ecNumber>
    </recommendedName>
    <alternativeName>
        <fullName evidence="1">Nucleoside 5'-monophosphate phosphohydrolase</fullName>
    </alternativeName>
</protein>
<proteinExistence type="inferred from homology"/>